<keyword id="KW-0238">DNA-binding</keyword>
<keyword id="KW-0423">Lactose metabolism</keyword>
<keyword id="KW-1185">Reference proteome</keyword>
<keyword id="KW-0678">Repressor</keyword>
<keyword id="KW-0804">Transcription</keyword>
<keyword id="KW-0805">Transcription regulation</keyword>
<accession>P0A0Q0</accession>
<accession>P16644</accession>
<accession>Q2G2R1</accession>
<gene>
    <name type="primary">lacR</name>
    <name type="ordered locus">SAOUHSC_02456</name>
</gene>
<sequence length="251" mass="28549">MNKHERLDEIAKLVNKKGTIRTNEIVEGLNVSDMTVRRDLIELENKGILTKIHGGARSNSTFQYKEISHKEKHTRQIAEKRFIAKKAASLIEDGDTLFFGPGTTVELLAEEVNHHTLTIITNCLPVYKILLEKQTAHFRVYLIGGEMRHITEAFVGEMANAMLEKLRFSKMFFSSNAVNKGAVMTSTLDEAYTQQLALSNSIEKYLLIDHTKVGKEDFTSFCQLNELTAVVMDYEDEEKVETIKTYIEVVD</sequence>
<comment type="function">
    <text>Repressor of the lactose catabolism operon. Galactose-6-phosphate is the inducer.</text>
</comment>
<comment type="sequence caution" evidence="2">
    <conflict type="erroneous initiation">
        <sequence resource="EMBL-CDS" id="ABD31476"/>
    </conflict>
</comment>
<name>LACR_STAA8</name>
<feature type="chain" id="PRO_0000050262" description="Lactose phosphotransferase system repressor">
    <location>
        <begin position="1"/>
        <end position="251"/>
    </location>
</feature>
<feature type="domain" description="HTH deoR-type" evidence="1">
    <location>
        <begin position="3"/>
        <end position="58"/>
    </location>
</feature>
<feature type="DNA-binding region" description="H-T-H motif" evidence="1">
    <location>
        <begin position="20"/>
        <end position="39"/>
    </location>
</feature>
<reference key="1">
    <citation type="journal article" date="1990" name="J. Bacteriol.">
        <title>Repression and catabolite repression of the lactose operon of Staphylococcus aureus.</title>
        <authorList>
            <person name="Oskouian B."/>
            <person name="Stewart G.C."/>
        </authorList>
    </citation>
    <scope>NUCLEOTIDE SEQUENCE [GENOMIC DNA]</scope>
</reference>
<reference key="2">
    <citation type="book" date="2006" name="Gram positive pathogens, 2nd edition">
        <title>The Staphylococcus aureus NCTC 8325 genome.</title>
        <editorList>
            <person name="Fischetti V."/>
            <person name="Novick R."/>
            <person name="Ferretti J."/>
            <person name="Portnoy D."/>
            <person name="Rood J."/>
        </editorList>
        <authorList>
            <person name="Gillaspy A.F."/>
            <person name="Worrell V."/>
            <person name="Orvis J."/>
            <person name="Roe B.A."/>
            <person name="Dyer D.W."/>
            <person name="Iandolo J.J."/>
        </authorList>
    </citation>
    <scope>NUCLEOTIDE SEQUENCE [LARGE SCALE GENOMIC DNA]</scope>
    <source>
        <strain>NCTC 8325 / PS 47</strain>
    </source>
</reference>
<organism>
    <name type="scientific">Staphylococcus aureus (strain NCTC 8325 / PS 47)</name>
    <dbReference type="NCBI Taxonomy" id="93061"/>
    <lineage>
        <taxon>Bacteria</taxon>
        <taxon>Bacillati</taxon>
        <taxon>Bacillota</taxon>
        <taxon>Bacilli</taxon>
        <taxon>Bacillales</taxon>
        <taxon>Staphylococcaceae</taxon>
        <taxon>Staphylococcus</taxon>
    </lineage>
</organism>
<dbReference type="EMBL" id="M32103">
    <property type="protein sequence ID" value="AAA67854.1"/>
    <property type="molecule type" value="Genomic_DNA"/>
</dbReference>
<dbReference type="EMBL" id="CP000253">
    <property type="protein sequence ID" value="ABD31476.1"/>
    <property type="status" value="ALT_INIT"/>
    <property type="molecule type" value="Genomic_DNA"/>
</dbReference>
<dbReference type="PIR" id="A44506">
    <property type="entry name" value="A44506"/>
</dbReference>
<dbReference type="RefSeq" id="WP_001032739.1">
    <property type="nucleotide sequence ID" value="NZ_LS483365.1"/>
</dbReference>
<dbReference type="RefSeq" id="WP_001793365.1">
    <property type="nucleotide sequence ID" value="NC_007795.1"/>
</dbReference>
<dbReference type="RefSeq" id="YP_500923.1">
    <property type="nucleotide sequence ID" value="NC_007795.1"/>
</dbReference>
<dbReference type="SMR" id="P0A0Q0"/>
<dbReference type="STRING" id="93061.SAOUHSC_02456"/>
<dbReference type="PaxDb" id="1280-SAXN108_2449"/>
<dbReference type="GeneID" id="3919019"/>
<dbReference type="KEGG" id="sao:SAOUHSC_02456"/>
<dbReference type="PATRIC" id="fig|93061.5.peg.2215"/>
<dbReference type="eggNOG" id="COG1349">
    <property type="taxonomic scope" value="Bacteria"/>
</dbReference>
<dbReference type="HOGENOM" id="CLU_060699_1_0_9"/>
<dbReference type="OrthoDB" id="9798651at2"/>
<dbReference type="PRO" id="PR:P0A0Q0"/>
<dbReference type="Proteomes" id="UP000008816">
    <property type="component" value="Chromosome"/>
</dbReference>
<dbReference type="GO" id="GO:0000987">
    <property type="term" value="F:cis-regulatory region sequence-specific DNA binding"/>
    <property type="evidence" value="ECO:0000318"/>
    <property type="project" value="GO_Central"/>
</dbReference>
<dbReference type="GO" id="GO:0098531">
    <property type="term" value="F:ligand-modulated transcription factor activity"/>
    <property type="evidence" value="ECO:0000318"/>
    <property type="project" value="GO_Central"/>
</dbReference>
<dbReference type="GO" id="GO:0005988">
    <property type="term" value="P:lactose metabolic process"/>
    <property type="evidence" value="ECO:0007669"/>
    <property type="project" value="UniProtKB-KW"/>
</dbReference>
<dbReference type="GO" id="GO:0006355">
    <property type="term" value="P:regulation of DNA-templated transcription"/>
    <property type="evidence" value="ECO:0000315"/>
    <property type="project" value="CACAO"/>
</dbReference>
<dbReference type="Gene3D" id="3.40.50.1360">
    <property type="match status" value="1"/>
</dbReference>
<dbReference type="Gene3D" id="1.10.10.10">
    <property type="entry name" value="Winged helix-like DNA-binding domain superfamily/Winged helix DNA-binding domain"/>
    <property type="match status" value="1"/>
</dbReference>
<dbReference type="InterPro" id="IPR050313">
    <property type="entry name" value="Carb_Metab_HTH_regulators"/>
</dbReference>
<dbReference type="InterPro" id="IPR014036">
    <property type="entry name" value="DeoR-like_C"/>
</dbReference>
<dbReference type="InterPro" id="IPR001034">
    <property type="entry name" value="DeoR_HTH"/>
</dbReference>
<dbReference type="InterPro" id="IPR037171">
    <property type="entry name" value="NagB/RpiA_transferase-like"/>
</dbReference>
<dbReference type="InterPro" id="IPR018356">
    <property type="entry name" value="Tscrpt_reg_HTH_DeoR_CS"/>
</dbReference>
<dbReference type="InterPro" id="IPR036388">
    <property type="entry name" value="WH-like_DNA-bd_sf"/>
</dbReference>
<dbReference type="InterPro" id="IPR036390">
    <property type="entry name" value="WH_DNA-bd_sf"/>
</dbReference>
<dbReference type="PANTHER" id="PTHR30363:SF4">
    <property type="entry name" value="GLYCEROL-3-PHOSPHATE REGULON REPRESSOR"/>
    <property type="match status" value="1"/>
</dbReference>
<dbReference type="PANTHER" id="PTHR30363">
    <property type="entry name" value="HTH-TYPE TRANSCRIPTIONAL REGULATOR SRLR-RELATED"/>
    <property type="match status" value="1"/>
</dbReference>
<dbReference type="Pfam" id="PF00455">
    <property type="entry name" value="DeoRC"/>
    <property type="match status" value="1"/>
</dbReference>
<dbReference type="Pfam" id="PF08220">
    <property type="entry name" value="HTH_DeoR"/>
    <property type="match status" value="1"/>
</dbReference>
<dbReference type="PRINTS" id="PR00037">
    <property type="entry name" value="HTHLACR"/>
</dbReference>
<dbReference type="SMART" id="SM01134">
    <property type="entry name" value="DeoRC"/>
    <property type="match status" value="1"/>
</dbReference>
<dbReference type="SMART" id="SM00420">
    <property type="entry name" value="HTH_DEOR"/>
    <property type="match status" value="1"/>
</dbReference>
<dbReference type="SUPFAM" id="SSF100950">
    <property type="entry name" value="NagB/RpiA/CoA transferase-like"/>
    <property type="match status" value="1"/>
</dbReference>
<dbReference type="SUPFAM" id="SSF46785">
    <property type="entry name" value="Winged helix' DNA-binding domain"/>
    <property type="match status" value="1"/>
</dbReference>
<dbReference type="PROSITE" id="PS00894">
    <property type="entry name" value="HTH_DEOR_1"/>
    <property type="match status" value="1"/>
</dbReference>
<dbReference type="PROSITE" id="PS51000">
    <property type="entry name" value="HTH_DEOR_2"/>
    <property type="match status" value="1"/>
</dbReference>
<protein>
    <recommendedName>
        <fullName>Lactose phosphotransferase system repressor</fullName>
    </recommendedName>
</protein>
<proteinExistence type="predicted"/>
<evidence type="ECO:0000255" key="1">
    <source>
        <dbReference type="PROSITE-ProRule" id="PRU00349"/>
    </source>
</evidence>
<evidence type="ECO:0000305" key="2"/>